<name>NDHI_LIRTU</name>
<proteinExistence type="inferred from homology"/>
<reference key="1">
    <citation type="journal article" date="2006" name="BMC Evol. Biol.">
        <title>Complete plastid genome sequences of Drimys, Liriodendron, and Piper: implications for the phylogenetic relationships of magnoliids.</title>
        <authorList>
            <person name="Cai Z."/>
            <person name="Penaflor C."/>
            <person name="Kuehl J.V."/>
            <person name="Leebens-Mack J."/>
            <person name="Carlson J.E."/>
            <person name="dePamphilis C.W."/>
            <person name="Boore J.L."/>
            <person name="Jansen R.K."/>
        </authorList>
    </citation>
    <scope>NUCLEOTIDE SEQUENCE [LARGE SCALE GENOMIC DNA]</scope>
</reference>
<dbReference type="EC" id="7.1.1.-" evidence="1"/>
<dbReference type="EMBL" id="DQ899947">
    <property type="protein sequence ID" value="ABI32563.1"/>
    <property type="molecule type" value="Genomic_DNA"/>
</dbReference>
<dbReference type="RefSeq" id="YP_740256.1">
    <property type="nucleotide sequence ID" value="NC_008326.1"/>
</dbReference>
<dbReference type="SMR" id="Q0G9G5"/>
<dbReference type="GeneID" id="4266688"/>
<dbReference type="GO" id="GO:0009535">
    <property type="term" value="C:chloroplast thylakoid membrane"/>
    <property type="evidence" value="ECO:0007669"/>
    <property type="project" value="UniProtKB-SubCell"/>
</dbReference>
<dbReference type="GO" id="GO:0051539">
    <property type="term" value="F:4 iron, 4 sulfur cluster binding"/>
    <property type="evidence" value="ECO:0007669"/>
    <property type="project" value="UniProtKB-KW"/>
</dbReference>
<dbReference type="GO" id="GO:0005506">
    <property type="term" value="F:iron ion binding"/>
    <property type="evidence" value="ECO:0007669"/>
    <property type="project" value="UniProtKB-UniRule"/>
</dbReference>
<dbReference type="GO" id="GO:0008137">
    <property type="term" value="F:NADH dehydrogenase (ubiquinone) activity"/>
    <property type="evidence" value="ECO:0007669"/>
    <property type="project" value="InterPro"/>
</dbReference>
<dbReference type="GO" id="GO:0048038">
    <property type="term" value="F:quinone binding"/>
    <property type="evidence" value="ECO:0007669"/>
    <property type="project" value="UniProtKB-KW"/>
</dbReference>
<dbReference type="GO" id="GO:0019684">
    <property type="term" value="P:photosynthesis, light reaction"/>
    <property type="evidence" value="ECO:0007669"/>
    <property type="project" value="UniProtKB-UniRule"/>
</dbReference>
<dbReference type="FunFam" id="3.30.70.3270:FF:000006">
    <property type="entry name" value="NAD(P)H-quinone oxidoreductase subunit I, chloroplastic"/>
    <property type="match status" value="1"/>
</dbReference>
<dbReference type="Gene3D" id="3.30.70.3270">
    <property type="match status" value="1"/>
</dbReference>
<dbReference type="HAMAP" id="MF_01351">
    <property type="entry name" value="NDH1_NuoI"/>
    <property type="match status" value="1"/>
</dbReference>
<dbReference type="InterPro" id="IPR017896">
    <property type="entry name" value="4Fe4S_Fe-S-bd"/>
</dbReference>
<dbReference type="InterPro" id="IPR017900">
    <property type="entry name" value="4Fe4S_Fe_S_CS"/>
</dbReference>
<dbReference type="InterPro" id="IPR010226">
    <property type="entry name" value="NADH_quinone_OxRdtase_chainI"/>
</dbReference>
<dbReference type="InterPro" id="IPR004497">
    <property type="entry name" value="NDHI"/>
</dbReference>
<dbReference type="NCBIfam" id="TIGR00403">
    <property type="entry name" value="ndhI"/>
    <property type="match status" value="1"/>
</dbReference>
<dbReference type="NCBIfam" id="TIGR01971">
    <property type="entry name" value="NuoI"/>
    <property type="match status" value="1"/>
</dbReference>
<dbReference type="NCBIfam" id="NF004537">
    <property type="entry name" value="PRK05888.1-3"/>
    <property type="match status" value="1"/>
</dbReference>
<dbReference type="PANTHER" id="PTHR47275">
    <property type="entry name" value="NAD(P)H-QUINONE OXIDOREDUCTASE SUBUNIT I, CHLOROPLASTIC"/>
    <property type="match status" value="1"/>
</dbReference>
<dbReference type="PANTHER" id="PTHR47275:SF1">
    <property type="entry name" value="NAD(P)H-QUINONE OXIDOREDUCTASE SUBUNIT I, CHLOROPLASTIC"/>
    <property type="match status" value="1"/>
</dbReference>
<dbReference type="Pfam" id="PF12838">
    <property type="entry name" value="Fer4_7"/>
    <property type="match status" value="1"/>
</dbReference>
<dbReference type="SUPFAM" id="SSF54862">
    <property type="entry name" value="4Fe-4S ferredoxins"/>
    <property type="match status" value="1"/>
</dbReference>
<dbReference type="PROSITE" id="PS00198">
    <property type="entry name" value="4FE4S_FER_1"/>
    <property type="match status" value="2"/>
</dbReference>
<dbReference type="PROSITE" id="PS51379">
    <property type="entry name" value="4FE4S_FER_2"/>
    <property type="match status" value="2"/>
</dbReference>
<gene>
    <name evidence="1" type="primary">ndhI</name>
</gene>
<protein>
    <recommendedName>
        <fullName evidence="1">NAD(P)H-quinone oxidoreductase subunit I, chloroplastic</fullName>
        <ecNumber evidence="1">7.1.1.-</ecNumber>
    </recommendedName>
    <alternativeName>
        <fullName evidence="1">NAD(P)H dehydrogenase subunit I</fullName>
        <shortName evidence="1">NDH subunit I</shortName>
    </alternativeName>
    <alternativeName>
        <fullName evidence="1">NADH-plastoquinone oxidoreductase subunit I</fullName>
    </alternativeName>
</protein>
<feature type="chain" id="PRO_0000275476" description="NAD(P)H-quinone oxidoreductase subunit I, chloroplastic">
    <location>
        <begin position="1"/>
        <end position="180"/>
    </location>
</feature>
<feature type="domain" description="4Fe-4S ferredoxin-type 1" evidence="1">
    <location>
        <begin position="55"/>
        <end position="84"/>
    </location>
</feature>
<feature type="domain" description="4Fe-4S ferredoxin-type 2" evidence="1">
    <location>
        <begin position="95"/>
        <end position="124"/>
    </location>
</feature>
<feature type="binding site" evidence="1">
    <location>
        <position position="64"/>
    </location>
    <ligand>
        <name>[4Fe-4S] cluster</name>
        <dbReference type="ChEBI" id="CHEBI:49883"/>
        <label>1</label>
    </ligand>
</feature>
<feature type="binding site" evidence="1">
    <location>
        <position position="67"/>
    </location>
    <ligand>
        <name>[4Fe-4S] cluster</name>
        <dbReference type="ChEBI" id="CHEBI:49883"/>
        <label>1</label>
    </ligand>
</feature>
<feature type="binding site" evidence="1">
    <location>
        <position position="70"/>
    </location>
    <ligand>
        <name>[4Fe-4S] cluster</name>
        <dbReference type="ChEBI" id="CHEBI:49883"/>
        <label>1</label>
    </ligand>
</feature>
<feature type="binding site" evidence="1">
    <location>
        <position position="74"/>
    </location>
    <ligand>
        <name>[4Fe-4S] cluster</name>
        <dbReference type="ChEBI" id="CHEBI:49883"/>
        <label>2</label>
    </ligand>
</feature>
<feature type="binding site" evidence="1">
    <location>
        <position position="104"/>
    </location>
    <ligand>
        <name>[4Fe-4S] cluster</name>
        <dbReference type="ChEBI" id="CHEBI:49883"/>
        <label>2</label>
    </ligand>
</feature>
<feature type="binding site" evidence="1">
    <location>
        <position position="107"/>
    </location>
    <ligand>
        <name>[4Fe-4S] cluster</name>
        <dbReference type="ChEBI" id="CHEBI:49883"/>
        <label>2</label>
    </ligand>
</feature>
<feature type="binding site" evidence="1">
    <location>
        <position position="110"/>
    </location>
    <ligand>
        <name>[4Fe-4S] cluster</name>
        <dbReference type="ChEBI" id="CHEBI:49883"/>
        <label>2</label>
    </ligand>
</feature>
<feature type="binding site" evidence="1">
    <location>
        <position position="114"/>
    </location>
    <ligand>
        <name>[4Fe-4S] cluster</name>
        <dbReference type="ChEBI" id="CHEBI:49883"/>
        <label>1</label>
    </ligand>
</feature>
<evidence type="ECO:0000255" key="1">
    <source>
        <dbReference type="HAMAP-Rule" id="MF_01351"/>
    </source>
</evidence>
<keyword id="KW-0004">4Fe-4S</keyword>
<keyword id="KW-0150">Chloroplast</keyword>
<keyword id="KW-0408">Iron</keyword>
<keyword id="KW-0411">Iron-sulfur</keyword>
<keyword id="KW-0472">Membrane</keyword>
<keyword id="KW-0479">Metal-binding</keyword>
<keyword id="KW-0520">NAD</keyword>
<keyword id="KW-0521">NADP</keyword>
<keyword id="KW-0934">Plastid</keyword>
<keyword id="KW-0618">Plastoquinone</keyword>
<keyword id="KW-0874">Quinone</keyword>
<keyword id="KW-0677">Repeat</keyword>
<keyword id="KW-0793">Thylakoid</keyword>
<keyword id="KW-1278">Translocase</keyword>
<accession>Q0G9G5</accession>
<organism>
    <name type="scientific">Liriodendron tulipifera</name>
    <name type="common">Tuliptree</name>
    <name type="synonym">Tulip poplar</name>
    <dbReference type="NCBI Taxonomy" id="3415"/>
    <lineage>
        <taxon>Eukaryota</taxon>
        <taxon>Viridiplantae</taxon>
        <taxon>Streptophyta</taxon>
        <taxon>Embryophyta</taxon>
        <taxon>Tracheophyta</taxon>
        <taxon>Spermatophyta</taxon>
        <taxon>Magnoliopsida</taxon>
        <taxon>Magnoliidae</taxon>
        <taxon>Magnoliales</taxon>
        <taxon>Magnoliaceae</taxon>
        <taxon>Liriodendron</taxon>
    </lineage>
</organism>
<geneLocation type="chloroplast"/>
<comment type="function">
    <text evidence="1">NDH shuttles electrons from NAD(P)H:plastoquinone, via FMN and iron-sulfur (Fe-S) centers, to quinones in the photosynthetic chain and possibly in a chloroplast respiratory chain. The immediate electron acceptor for the enzyme in this species is believed to be plastoquinone. Couples the redox reaction to proton translocation, and thus conserves the redox energy in a proton gradient.</text>
</comment>
<comment type="catalytic activity">
    <reaction evidence="1">
        <text>a plastoquinone + NADH + (n+1) H(+)(in) = a plastoquinol + NAD(+) + n H(+)(out)</text>
        <dbReference type="Rhea" id="RHEA:42608"/>
        <dbReference type="Rhea" id="RHEA-COMP:9561"/>
        <dbReference type="Rhea" id="RHEA-COMP:9562"/>
        <dbReference type="ChEBI" id="CHEBI:15378"/>
        <dbReference type="ChEBI" id="CHEBI:17757"/>
        <dbReference type="ChEBI" id="CHEBI:57540"/>
        <dbReference type="ChEBI" id="CHEBI:57945"/>
        <dbReference type="ChEBI" id="CHEBI:62192"/>
    </reaction>
</comment>
<comment type="catalytic activity">
    <reaction evidence="1">
        <text>a plastoquinone + NADPH + (n+1) H(+)(in) = a plastoquinol + NADP(+) + n H(+)(out)</text>
        <dbReference type="Rhea" id="RHEA:42612"/>
        <dbReference type="Rhea" id="RHEA-COMP:9561"/>
        <dbReference type="Rhea" id="RHEA-COMP:9562"/>
        <dbReference type="ChEBI" id="CHEBI:15378"/>
        <dbReference type="ChEBI" id="CHEBI:17757"/>
        <dbReference type="ChEBI" id="CHEBI:57783"/>
        <dbReference type="ChEBI" id="CHEBI:58349"/>
        <dbReference type="ChEBI" id="CHEBI:62192"/>
    </reaction>
</comment>
<comment type="cofactor">
    <cofactor evidence="1">
        <name>[4Fe-4S] cluster</name>
        <dbReference type="ChEBI" id="CHEBI:49883"/>
    </cofactor>
    <text evidence="1">Binds 2 [4Fe-4S] clusters per subunit.</text>
</comment>
<comment type="subunit">
    <text evidence="1">NDH is composed of at least 16 different subunits, 5 of which are encoded in the nucleus.</text>
</comment>
<comment type="subcellular location">
    <subcellularLocation>
        <location evidence="1">Plastid</location>
        <location evidence="1">Chloroplast thylakoid membrane</location>
        <topology evidence="1">Peripheral membrane protein</topology>
    </subcellularLocation>
</comment>
<comment type="similarity">
    <text evidence="1">Belongs to the complex I 23 kDa subunit family.</text>
</comment>
<sequence length="180" mass="20964">MFPMMTGFMNYGQQTVRAARYIGQSFMITLSHANRLPVTIQYPYEKSITSERFRGRIHFEFDKCIACEVCVRVCPIDLPVVDWRLETDIRKKRLLNYSIDFGICIFCGNCVEYCPTNCLSMTEEYELSTYDRHELNYNQIALGRLPMSVIGDYTIRTIMNSTQIKIATDNPLDSRTITNY</sequence>